<keyword id="KW-0963">Cytoplasm</keyword>
<keyword id="KW-0520">NAD</keyword>
<keyword id="KW-0560">Oxidoreductase</keyword>
<comment type="function">
    <text evidence="1">Catalyzes the conversion of lactate to pyruvate.</text>
</comment>
<comment type="catalytic activity">
    <reaction evidence="1">
        <text>(S)-lactate + NAD(+) = pyruvate + NADH + H(+)</text>
        <dbReference type="Rhea" id="RHEA:23444"/>
        <dbReference type="ChEBI" id="CHEBI:15361"/>
        <dbReference type="ChEBI" id="CHEBI:15378"/>
        <dbReference type="ChEBI" id="CHEBI:16651"/>
        <dbReference type="ChEBI" id="CHEBI:57540"/>
        <dbReference type="ChEBI" id="CHEBI:57945"/>
        <dbReference type="EC" id="1.1.1.27"/>
    </reaction>
</comment>
<comment type="pathway">
    <text evidence="1">Fermentation; pyruvate fermentation to lactate; (S)-lactate from pyruvate: step 1/1.</text>
</comment>
<comment type="subunit">
    <text evidence="1">Homotetramer.</text>
</comment>
<comment type="subcellular location">
    <subcellularLocation>
        <location evidence="1">Cytoplasm</location>
    </subcellularLocation>
</comment>
<comment type="similarity">
    <text evidence="1">Belongs to the LDH/MDH superfamily. LDH family.</text>
</comment>
<dbReference type="EC" id="1.1.1.27" evidence="1"/>
<dbReference type="EMBL" id="AL596169">
    <property type="protein sequence ID" value="CAC96800.1"/>
    <property type="molecule type" value="Genomic_DNA"/>
</dbReference>
<dbReference type="PIR" id="AH1628">
    <property type="entry name" value="AH1628"/>
</dbReference>
<dbReference type="RefSeq" id="WP_003762403.1">
    <property type="nucleotide sequence ID" value="NC_003212.1"/>
</dbReference>
<dbReference type="SMR" id="Q92BI0"/>
<dbReference type="STRING" id="272626.gene:17565900"/>
<dbReference type="GeneID" id="93234951"/>
<dbReference type="KEGG" id="lin:lin1569"/>
<dbReference type="eggNOG" id="COG0039">
    <property type="taxonomic scope" value="Bacteria"/>
</dbReference>
<dbReference type="HOGENOM" id="CLU_045401_1_2_9"/>
<dbReference type="OrthoDB" id="9802969at2"/>
<dbReference type="UniPathway" id="UPA00554">
    <property type="reaction ID" value="UER00611"/>
</dbReference>
<dbReference type="Proteomes" id="UP000002513">
    <property type="component" value="Chromosome"/>
</dbReference>
<dbReference type="GO" id="GO:0005737">
    <property type="term" value="C:cytoplasm"/>
    <property type="evidence" value="ECO:0007669"/>
    <property type="project" value="UniProtKB-SubCell"/>
</dbReference>
<dbReference type="GO" id="GO:0004459">
    <property type="term" value="F:L-lactate dehydrogenase activity"/>
    <property type="evidence" value="ECO:0007669"/>
    <property type="project" value="UniProtKB-UniRule"/>
</dbReference>
<dbReference type="GO" id="GO:0006096">
    <property type="term" value="P:glycolytic process"/>
    <property type="evidence" value="ECO:0007669"/>
    <property type="project" value="UniProtKB-UniRule"/>
</dbReference>
<dbReference type="GO" id="GO:0006089">
    <property type="term" value="P:lactate metabolic process"/>
    <property type="evidence" value="ECO:0007669"/>
    <property type="project" value="TreeGrafter"/>
</dbReference>
<dbReference type="CDD" id="cd05291">
    <property type="entry name" value="HicDH_like"/>
    <property type="match status" value="1"/>
</dbReference>
<dbReference type="Gene3D" id="3.90.110.10">
    <property type="entry name" value="Lactate dehydrogenase/glycoside hydrolase, family 4, C-terminal"/>
    <property type="match status" value="1"/>
</dbReference>
<dbReference type="Gene3D" id="3.40.50.720">
    <property type="entry name" value="NAD(P)-binding Rossmann-like Domain"/>
    <property type="match status" value="1"/>
</dbReference>
<dbReference type="HAMAP" id="MF_00488">
    <property type="entry name" value="Lactate_dehydrog"/>
    <property type="match status" value="1"/>
</dbReference>
<dbReference type="InterPro" id="IPR001557">
    <property type="entry name" value="L-lactate/malate_DH"/>
</dbReference>
<dbReference type="InterPro" id="IPR011304">
    <property type="entry name" value="L-lactate_DH"/>
</dbReference>
<dbReference type="InterPro" id="IPR018177">
    <property type="entry name" value="L-lactate_DH_AS"/>
</dbReference>
<dbReference type="InterPro" id="IPR022383">
    <property type="entry name" value="Lactate/malate_DH_C"/>
</dbReference>
<dbReference type="InterPro" id="IPR001236">
    <property type="entry name" value="Lactate/malate_DH_N"/>
</dbReference>
<dbReference type="InterPro" id="IPR015955">
    <property type="entry name" value="Lactate_DH/Glyco_Ohase_4_C"/>
</dbReference>
<dbReference type="InterPro" id="IPR036291">
    <property type="entry name" value="NAD(P)-bd_dom_sf"/>
</dbReference>
<dbReference type="NCBIfam" id="TIGR01771">
    <property type="entry name" value="L-LDH-NAD"/>
    <property type="match status" value="1"/>
</dbReference>
<dbReference type="NCBIfam" id="NF000824">
    <property type="entry name" value="PRK00066.1"/>
    <property type="match status" value="1"/>
</dbReference>
<dbReference type="PANTHER" id="PTHR43128">
    <property type="entry name" value="L-2-HYDROXYCARBOXYLATE DEHYDROGENASE (NAD(P)(+))"/>
    <property type="match status" value="1"/>
</dbReference>
<dbReference type="PANTHER" id="PTHR43128:SF16">
    <property type="entry name" value="L-LACTATE DEHYDROGENASE"/>
    <property type="match status" value="1"/>
</dbReference>
<dbReference type="Pfam" id="PF02866">
    <property type="entry name" value="Ldh_1_C"/>
    <property type="match status" value="1"/>
</dbReference>
<dbReference type="Pfam" id="PF00056">
    <property type="entry name" value="Ldh_1_N"/>
    <property type="match status" value="1"/>
</dbReference>
<dbReference type="PIRSF" id="PIRSF000102">
    <property type="entry name" value="Lac_mal_DH"/>
    <property type="match status" value="1"/>
</dbReference>
<dbReference type="PRINTS" id="PR00086">
    <property type="entry name" value="LLDHDRGNASE"/>
</dbReference>
<dbReference type="SUPFAM" id="SSF56327">
    <property type="entry name" value="LDH C-terminal domain-like"/>
    <property type="match status" value="1"/>
</dbReference>
<dbReference type="SUPFAM" id="SSF51735">
    <property type="entry name" value="NAD(P)-binding Rossmann-fold domains"/>
    <property type="match status" value="1"/>
</dbReference>
<dbReference type="PROSITE" id="PS00064">
    <property type="entry name" value="L_LDH"/>
    <property type="match status" value="1"/>
</dbReference>
<protein>
    <recommendedName>
        <fullName evidence="1">L-lactate dehydrogenase 2</fullName>
        <shortName evidence="1">L-LDH 2</shortName>
        <ecNumber evidence="1">1.1.1.27</ecNumber>
    </recommendedName>
</protein>
<evidence type="ECO:0000255" key="1">
    <source>
        <dbReference type="HAMAP-Rule" id="MF_00488"/>
    </source>
</evidence>
<accession>Q92BI0</accession>
<reference key="1">
    <citation type="journal article" date="2001" name="Science">
        <title>Comparative genomics of Listeria species.</title>
        <authorList>
            <person name="Glaser P."/>
            <person name="Frangeul L."/>
            <person name="Buchrieser C."/>
            <person name="Rusniok C."/>
            <person name="Amend A."/>
            <person name="Baquero F."/>
            <person name="Berche P."/>
            <person name="Bloecker H."/>
            <person name="Brandt P."/>
            <person name="Chakraborty T."/>
            <person name="Charbit A."/>
            <person name="Chetouani F."/>
            <person name="Couve E."/>
            <person name="de Daruvar A."/>
            <person name="Dehoux P."/>
            <person name="Domann E."/>
            <person name="Dominguez-Bernal G."/>
            <person name="Duchaud E."/>
            <person name="Durant L."/>
            <person name="Dussurget O."/>
            <person name="Entian K.-D."/>
            <person name="Fsihi H."/>
            <person name="Garcia-del Portillo F."/>
            <person name="Garrido P."/>
            <person name="Gautier L."/>
            <person name="Goebel W."/>
            <person name="Gomez-Lopez N."/>
            <person name="Hain T."/>
            <person name="Hauf J."/>
            <person name="Jackson D."/>
            <person name="Jones L.-M."/>
            <person name="Kaerst U."/>
            <person name="Kreft J."/>
            <person name="Kuhn M."/>
            <person name="Kunst F."/>
            <person name="Kurapkat G."/>
            <person name="Madueno E."/>
            <person name="Maitournam A."/>
            <person name="Mata Vicente J."/>
            <person name="Ng E."/>
            <person name="Nedjari H."/>
            <person name="Nordsiek G."/>
            <person name="Novella S."/>
            <person name="de Pablos B."/>
            <person name="Perez-Diaz J.-C."/>
            <person name="Purcell R."/>
            <person name="Remmel B."/>
            <person name="Rose M."/>
            <person name="Schlueter T."/>
            <person name="Simoes N."/>
            <person name="Tierrez A."/>
            <person name="Vazquez-Boland J.-A."/>
            <person name="Voss H."/>
            <person name="Wehland J."/>
            <person name="Cossart P."/>
        </authorList>
    </citation>
    <scope>NUCLEOTIDE SEQUENCE [LARGE SCALE GENOMIC DNA]</scope>
    <source>
        <strain>ATCC BAA-680 / CLIP 11262</strain>
    </source>
</reference>
<organism>
    <name type="scientific">Listeria innocua serovar 6a (strain ATCC BAA-680 / CLIP 11262)</name>
    <dbReference type="NCBI Taxonomy" id="272626"/>
    <lineage>
        <taxon>Bacteria</taxon>
        <taxon>Bacillati</taxon>
        <taxon>Bacillota</taxon>
        <taxon>Bacilli</taxon>
        <taxon>Bacillales</taxon>
        <taxon>Listeriaceae</taxon>
        <taxon>Listeria</taxon>
    </lineage>
</organism>
<gene>
    <name evidence="1" type="primary">ldh2</name>
    <name type="ordered locus">lin1569</name>
</gene>
<sequence>MKPRKVMIIGAGNVGSAAAHAFVNQKFVEELILVDLNKERVEGNRKDLADAAAFMSGKMDISVREASDCADVDIAVITVTAGPLKEGQTRLDELRSTSRIVASIVPEMMKGGFKGIFLIATNPCDIITYQVWKLSGLPREQVLGTGVWLDTTRLRRLLAEKLDIAAQSIDAFILGEHGDSQFPVWSHSSIYGKPVNEYSMEKLGESLDLKLIGETARDTGFEIYHQKGCTEYGIAGTIVEICRHIFSGSQRALTVSCVLDGEYGQTGLAIGVPAVLSQNGVKEIISLKLNEQEQQAFDHSAAVIKENIKSI</sequence>
<proteinExistence type="inferred from homology"/>
<name>LDH2_LISIN</name>
<feature type="chain" id="PRO_0000168362" description="L-lactate dehydrogenase 2">
    <location>
        <begin position="1"/>
        <end position="311"/>
    </location>
</feature>
<feature type="active site" description="Proton acceptor" evidence="1">
    <location>
        <position position="177"/>
    </location>
</feature>
<feature type="binding site" evidence="1">
    <location>
        <position position="14"/>
    </location>
    <ligand>
        <name>NAD(+)</name>
        <dbReference type="ChEBI" id="CHEBI:57540"/>
    </ligand>
</feature>
<feature type="binding site" evidence="1">
    <location>
        <position position="35"/>
    </location>
    <ligand>
        <name>NAD(+)</name>
        <dbReference type="ChEBI" id="CHEBI:57540"/>
    </ligand>
</feature>
<feature type="binding site" evidence="1">
    <location>
        <position position="40"/>
    </location>
    <ligand>
        <name>NAD(+)</name>
        <dbReference type="ChEBI" id="CHEBI:57540"/>
    </ligand>
</feature>
<feature type="binding site" evidence="1">
    <location>
        <position position="90"/>
    </location>
    <ligand>
        <name>substrate</name>
    </ligand>
</feature>
<feature type="binding site" evidence="1">
    <location>
        <position position="103"/>
    </location>
    <ligand>
        <name>NAD(+)</name>
        <dbReference type="ChEBI" id="CHEBI:57540"/>
    </ligand>
</feature>
<feature type="binding site" evidence="1">
    <location>
        <begin position="120"/>
        <end position="122"/>
    </location>
    <ligand>
        <name>NAD(+)</name>
        <dbReference type="ChEBI" id="CHEBI:57540"/>
    </ligand>
</feature>
<feature type="binding site" evidence="1">
    <location>
        <begin position="122"/>
        <end position="125"/>
    </location>
    <ligand>
        <name>substrate</name>
    </ligand>
</feature>
<feature type="binding site" evidence="1">
    <location>
        <position position="145"/>
    </location>
    <ligand>
        <name>NAD(+)</name>
        <dbReference type="ChEBI" id="CHEBI:57540"/>
    </ligand>
</feature>
<feature type="binding site" evidence="1">
    <location>
        <begin position="150"/>
        <end position="153"/>
    </location>
    <ligand>
        <name>substrate</name>
    </ligand>
</feature>
<feature type="binding site" evidence="1">
    <location>
        <position position="230"/>
    </location>
    <ligand>
        <name>substrate</name>
    </ligand>
</feature>